<dbReference type="EMBL" id="FM209186">
    <property type="protein sequence ID" value="CAW29557.1"/>
    <property type="molecule type" value="Genomic_DNA"/>
</dbReference>
<dbReference type="RefSeq" id="WP_003110149.1">
    <property type="nucleotide sequence ID" value="NC_011770.1"/>
</dbReference>
<dbReference type="SMR" id="B7UZK2"/>
<dbReference type="KEGG" id="pag:PLES_48031"/>
<dbReference type="HOGENOM" id="CLU_115353_1_0_6"/>
<dbReference type="GO" id="GO:0003676">
    <property type="term" value="F:nucleic acid binding"/>
    <property type="evidence" value="ECO:0007669"/>
    <property type="project" value="InterPro"/>
</dbReference>
<dbReference type="Gene3D" id="3.40.1350.10">
    <property type="match status" value="1"/>
</dbReference>
<dbReference type="HAMAP" id="MF_00048">
    <property type="entry name" value="UPF0102"/>
    <property type="match status" value="1"/>
</dbReference>
<dbReference type="InterPro" id="IPR011335">
    <property type="entry name" value="Restrct_endonuc-II-like"/>
</dbReference>
<dbReference type="InterPro" id="IPR011856">
    <property type="entry name" value="tRNA_endonuc-like_dom_sf"/>
</dbReference>
<dbReference type="InterPro" id="IPR003509">
    <property type="entry name" value="UPF0102_YraN-like"/>
</dbReference>
<dbReference type="NCBIfam" id="NF009150">
    <property type="entry name" value="PRK12497.1-3"/>
    <property type="match status" value="1"/>
</dbReference>
<dbReference type="NCBIfam" id="TIGR00252">
    <property type="entry name" value="YraN family protein"/>
    <property type="match status" value="1"/>
</dbReference>
<dbReference type="PANTHER" id="PTHR34039">
    <property type="entry name" value="UPF0102 PROTEIN YRAN"/>
    <property type="match status" value="1"/>
</dbReference>
<dbReference type="PANTHER" id="PTHR34039:SF1">
    <property type="entry name" value="UPF0102 PROTEIN YRAN"/>
    <property type="match status" value="1"/>
</dbReference>
<dbReference type="Pfam" id="PF02021">
    <property type="entry name" value="UPF0102"/>
    <property type="match status" value="1"/>
</dbReference>
<dbReference type="SUPFAM" id="SSF52980">
    <property type="entry name" value="Restriction endonuclease-like"/>
    <property type="match status" value="1"/>
</dbReference>
<reference key="1">
    <citation type="journal article" date="2009" name="Genome Res.">
        <title>Newly introduced genomic prophage islands are critical determinants of in vivo competitiveness in the Liverpool epidemic strain of Pseudomonas aeruginosa.</title>
        <authorList>
            <person name="Winstanley C."/>
            <person name="Langille M.G.I."/>
            <person name="Fothergill J.L."/>
            <person name="Kukavica-Ibrulj I."/>
            <person name="Paradis-Bleau C."/>
            <person name="Sanschagrin F."/>
            <person name="Thomson N.R."/>
            <person name="Winsor G.L."/>
            <person name="Quail M.A."/>
            <person name="Lennard N."/>
            <person name="Bignell A."/>
            <person name="Clarke L."/>
            <person name="Seeger K."/>
            <person name="Saunders D."/>
            <person name="Harris D."/>
            <person name="Parkhill J."/>
            <person name="Hancock R.E.W."/>
            <person name="Brinkman F.S.L."/>
            <person name="Levesque R.C."/>
        </authorList>
    </citation>
    <scope>NUCLEOTIDE SEQUENCE [LARGE SCALE GENOMIC DNA]</scope>
    <source>
        <strain>LESB58</strain>
    </source>
</reference>
<protein>
    <recommendedName>
        <fullName evidence="1">UPF0102 protein PLES_48031</fullName>
    </recommendedName>
</protein>
<proteinExistence type="inferred from homology"/>
<name>Y4803_PSEA8</name>
<sequence length="125" mass="14366">MTDRESSRDKGRQAEELACAHLRRQGLATLGKNWTCRRGELDLVMLDGDTVVFVEVRSRRHRAWGGALESIDARKRQRLILSAELFLQQEARWAKRPCRFDVVTVDTSDGQSPPRLDWIQNAFDA</sequence>
<gene>
    <name type="ordered locus">PLES_48031</name>
</gene>
<feature type="chain" id="PRO_1000200156" description="UPF0102 protein PLES_48031">
    <location>
        <begin position="1"/>
        <end position="125"/>
    </location>
</feature>
<accession>B7UZK2</accession>
<comment type="similarity">
    <text evidence="1">Belongs to the UPF0102 family.</text>
</comment>
<evidence type="ECO:0000255" key="1">
    <source>
        <dbReference type="HAMAP-Rule" id="MF_00048"/>
    </source>
</evidence>
<organism>
    <name type="scientific">Pseudomonas aeruginosa (strain LESB58)</name>
    <dbReference type="NCBI Taxonomy" id="557722"/>
    <lineage>
        <taxon>Bacteria</taxon>
        <taxon>Pseudomonadati</taxon>
        <taxon>Pseudomonadota</taxon>
        <taxon>Gammaproteobacteria</taxon>
        <taxon>Pseudomonadales</taxon>
        <taxon>Pseudomonadaceae</taxon>
        <taxon>Pseudomonas</taxon>
    </lineage>
</organism>